<sequence length="125" mass="14266">MILPNSTAVMPFLTTVWQGTVQPSSNASGLARRSPLRDDGKLEALYILMVLGFFGFFTLGIMLSYIRSKKLEHSHDPFNVYIESDTWQEKDKAFFQARVLENCRSCCVIENQLTVEQPNTYLPEL</sequence>
<gene>
    <name type="primary">KCNE1</name>
</gene>
<dbReference type="EMBL" id="L20462">
    <property type="protein sequence ID" value="AAA72394.1"/>
    <property type="molecule type" value="mRNA"/>
</dbReference>
<dbReference type="PIR" id="A49392">
    <property type="entry name" value="A49392"/>
</dbReference>
<dbReference type="PIR" id="I48146">
    <property type="entry name" value="I48146"/>
</dbReference>
<dbReference type="RefSeq" id="NP_001166443.1">
    <property type="nucleotide sequence ID" value="NM_001172972.1"/>
</dbReference>
<dbReference type="SMR" id="Q60409"/>
<dbReference type="FunCoup" id="Q60409">
    <property type="interactions" value="19"/>
</dbReference>
<dbReference type="STRING" id="10141.ENSCPOP00000023836"/>
<dbReference type="ChEMBL" id="CHEMBL5241"/>
<dbReference type="GlyCosmos" id="Q60409">
    <property type="glycosylation" value="2 sites, No reported glycans"/>
</dbReference>
<dbReference type="Ensembl" id="ENSCPOT00000038529.1">
    <property type="protein sequence ID" value="ENSCPOP00000023836.1"/>
    <property type="gene ID" value="ENSCPOG00000037389.1"/>
</dbReference>
<dbReference type="GeneID" id="100135562"/>
<dbReference type="KEGG" id="cpoc:100135562"/>
<dbReference type="CTD" id="3753"/>
<dbReference type="VEuPathDB" id="HostDB:ENSCPOG00000037389"/>
<dbReference type="eggNOG" id="ENOG502SG7D">
    <property type="taxonomic scope" value="Eukaryota"/>
</dbReference>
<dbReference type="GeneTree" id="ENSGT00940000154497"/>
<dbReference type="HOGENOM" id="CLU_159026_0_0_1"/>
<dbReference type="InParanoid" id="Q60409"/>
<dbReference type="OMA" id="ESCRACY"/>
<dbReference type="OrthoDB" id="8772344at2759"/>
<dbReference type="TreeFam" id="TF335976"/>
<dbReference type="PRO" id="PR:Q60409"/>
<dbReference type="Proteomes" id="UP000005447">
    <property type="component" value="Unassembled WGS sequence"/>
</dbReference>
<dbReference type="Bgee" id="ENSCPOG00000037389">
    <property type="expression patterns" value="Expressed in heart left ventricle and 8 other cell types or tissues"/>
</dbReference>
<dbReference type="GO" id="GO:0016324">
    <property type="term" value="C:apical plasma membrane"/>
    <property type="evidence" value="ECO:0007669"/>
    <property type="project" value="UniProtKB-SubCell"/>
</dbReference>
<dbReference type="GO" id="GO:0009986">
    <property type="term" value="C:cell surface"/>
    <property type="evidence" value="ECO:0007669"/>
    <property type="project" value="Ensembl"/>
</dbReference>
<dbReference type="GO" id="GO:0045121">
    <property type="term" value="C:membrane raft"/>
    <property type="evidence" value="ECO:0007669"/>
    <property type="project" value="UniProtKB-SubCell"/>
</dbReference>
<dbReference type="GO" id="GO:0005886">
    <property type="term" value="C:plasma membrane"/>
    <property type="evidence" value="ECO:0000250"/>
    <property type="project" value="UniProtKB"/>
</dbReference>
<dbReference type="GO" id="GO:0008076">
    <property type="term" value="C:voltage-gated potassium channel complex"/>
    <property type="evidence" value="ECO:0007669"/>
    <property type="project" value="Ensembl"/>
</dbReference>
<dbReference type="GO" id="GO:0005251">
    <property type="term" value="F:delayed rectifier potassium channel activity"/>
    <property type="evidence" value="ECO:0000250"/>
    <property type="project" value="UniProtKB"/>
</dbReference>
<dbReference type="GO" id="GO:0015459">
    <property type="term" value="F:potassium channel regulator activity"/>
    <property type="evidence" value="ECO:0000250"/>
    <property type="project" value="UniProtKB"/>
</dbReference>
<dbReference type="GO" id="GO:0031433">
    <property type="term" value="F:telethonin binding"/>
    <property type="evidence" value="ECO:0007669"/>
    <property type="project" value="Ensembl"/>
</dbReference>
<dbReference type="GO" id="GO:0044325">
    <property type="term" value="F:transmembrane transporter binding"/>
    <property type="evidence" value="ECO:0007669"/>
    <property type="project" value="TreeGrafter"/>
</dbReference>
<dbReference type="GO" id="GO:0071320">
    <property type="term" value="P:cellular response to cAMP"/>
    <property type="evidence" value="ECO:0007669"/>
    <property type="project" value="Ensembl"/>
</dbReference>
<dbReference type="GO" id="GO:0002070">
    <property type="term" value="P:epithelial cell maturation"/>
    <property type="evidence" value="ECO:0007669"/>
    <property type="project" value="Ensembl"/>
</dbReference>
<dbReference type="GO" id="GO:0098915">
    <property type="term" value="P:membrane repolarization during ventricular cardiac muscle cell action potential"/>
    <property type="evidence" value="ECO:0007669"/>
    <property type="project" value="Ensembl"/>
</dbReference>
<dbReference type="GO" id="GO:1902260">
    <property type="term" value="P:negative regulation of delayed rectifier potassium channel activity"/>
    <property type="evidence" value="ECO:0000250"/>
    <property type="project" value="UniProtKB"/>
</dbReference>
<dbReference type="GO" id="GO:1901381">
    <property type="term" value="P:positive regulation of potassium ion transmembrane transport"/>
    <property type="evidence" value="ECO:0007669"/>
    <property type="project" value="Ensembl"/>
</dbReference>
<dbReference type="GO" id="GO:0097623">
    <property type="term" value="P:potassium ion export across plasma membrane"/>
    <property type="evidence" value="ECO:0007669"/>
    <property type="project" value="Ensembl"/>
</dbReference>
<dbReference type="GO" id="GO:0086091">
    <property type="term" value="P:regulation of heart rate by cardiac conduction"/>
    <property type="evidence" value="ECO:0007669"/>
    <property type="project" value="Ensembl"/>
</dbReference>
<dbReference type="GO" id="GO:0060307">
    <property type="term" value="P:regulation of ventricular cardiac muscle cell membrane repolarization"/>
    <property type="evidence" value="ECO:0007669"/>
    <property type="project" value="Ensembl"/>
</dbReference>
<dbReference type="GO" id="GO:0033363">
    <property type="term" value="P:secretory granule organization"/>
    <property type="evidence" value="ECO:0007669"/>
    <property type="project" value="Ensembl"/>
</dbReference>
<dbReference type="GO" id="GO:0021750">
    <property type="term" value="P:vestibular nucleus development"/>
    <property type="evidence" value="ECO:0007669"/>
    <property type="project" value="Ensembl"/>
</dbReference>
<dbReference type="InterPro" id="IPR000369">
    <property type="entry name" value="K_chnl_KCNE"/>
</dbReference>
<dbReference type="InterPro" id="IPR005424">
    <property type="entry name" value="KCNE1"/>
</dbReference>
<dbReference type="PANTHER" id="PTHR15282:SF10">
    <property type="entry name" value="POTASSIUM VOLTAGE-GATED CHANNEL SUBFAMILY E MEMBER 1"/>
    <property type="match status" value="1"/>
</dbReference>
<dbReference type="PANTHER" id="PTHR15282">
    <property type="entry name" value="POTASSIUM VOLTAGE-GATED CHANNEL SUBFAMILY E MEMBER 1, 3"/>
    <property type="match status" value="1"/>
</dbReference>
<dbReference type="Pfam" id="PF02060">
    <property type="entry name" value="ISK_Channel"/>
    <property type="match status" value="1"/>
</dbReference>
<dbReference type="PRINTS" id="PR01604">
    <property type="entry name" value="KCNE1CHANNEL"/>
</dbReference>
<dbReference type="PRINTS" id="PR00168">
    <property type="entry name" value="KCNECHANNEL"/>
</dbReference>
<comment type="function">
    <text evidence="2">Ancillary protein that functions as a regulatory subunit of the voltage-gated potassium (Kv) channel complex composed of pore-forming and potassium-conducting alpha subunits and of regulatory beta subunits. KCNE1 beta subunit modulates the gating kinetics and enhances stability of the channel complex. Alters the gating of the delayed rectifier Kv channel containing KCNB1 alpha subunit. Associates with KCNQ1/KVLQT1 alpha subunit to form the slowly activating delayed rectifier cardiac potassium (IKs) channel responsible for ventricular muscle action potential repolarization. The outward current reaches its steady state only after 50 seconds. Assembly with KCNH2/HERG alpha subunit Kv channel may regulate the rapidly activating component of the delayed rectifying potassium current (IKr) in heart.</text>
</comment>
<comment type="subunit">
    <text evidence="2 3 4">Interacts with KCNB1. Interacts with KCNC2 (By similarity). Associates with KCNH2/HERG. Interacts with KCNQ1; targets the complex KCNQ1-KCNE1 to the membrane raft (By similarity).</text>
</comment>
<comment type="subcellular location">
    <subcellularLocation>
        <location evidence="2 3">Cell membrane</location>
        <topology evidence="2">Single-pass type I membrane protein</topology>
    </subcellularLocation>
    <subcellularLocation>
        <location evidence="3">Apical cell membrane</location>
    </subcellularLocation>
    <subcellularLocation>
        <location evidence="2">Membrane raft</location>
    </subcellularLocation>
    <text evidence="2 3">Colocalizes with KCNB1 at the plasma membrane (By similarity). Targets to the membrane raft when associated with KCNQ1 (By similarity).</text>
</comment>
<comment type="PTM">
    <text evidence="1">Phosphorylation inhibits the potassium current.</text>
</comment>
<comment type="PTM">
    <text evidence="1">N-glycosylation at Asn-26 occurs post-translationally, and requires prior cotranslational glycosylation at Asn-5.</text>
</comment>
<comment type="similarity">
    <text evidence="6">Belongs to the potassium channel KCNE family.</text>
</comment>
<name>KCNE1_CAVPO</name>
<keyword id="KW-1003">Cell membrane</keyword>
<keyword id="KW-0325">Glycoprotein</keyword>
<keyword id="KW-0407">Ion channel</keyword>
<keyword id="KW-0406">Ion transport</keyword>
<keyword id="KW-0472">Membrane</keyword>
<keyword id="KW-0597">Phosphoprotein</keyword>
<keyword id="KW-0630">Potassium</keyword>
<keyword id="KW-0631">Potassium channel</keyword>
<keyword id="KW-0633">Potassium transport</keyword>
<keyword id="KW-1185">Reference proteome</keyword>
<keyword id="KW-0812">Transmembrane</keyword>
<keyword id="KW-1133">Transmembrane helix</keyword>
<keyword id="KW-0813">Transport</keyword>
<keyword id="KW-0851">Voltage-gated channel</keyword>
<evidence type="ECO:0000250" key="1"/>
<evidence type="ECO:0000250" key="2">
    <source>
        <dbReference type="UniProtKB" id="P15382"/>
    </source>
</evidence>
<evidence type="ECO:0000250" key="3">
    <source>
        <dbReference type="UniProtKB" id="P15383"/>
    </source>
</evidence>
<evidence type="ECO:0000250" key="4">
    <source>
        <dbReference type="UniProtKB" id="P23299"/>
    </source>
</evidence>
<evidence type="ECO:0000255" key="5"/>
<evidence type="ECO:0000305" key="6"/>
<accession>Q60409</accession>
<accession>Q9QVZ5</accession>
<organism>
    <name type="scientific">Cavia porcellus</name>
    <name type="common">Guinea pig</name>
    <dbReference type="NCBI Taxonomy" id="10141"/>
    <lineage>
        <taxon>Eukaryota</taxon>
        <taxon>Metazoa</taxon>
        <taxon>Chordata</taxon>
        <taxon>Craniata</taxon>
        <taxon>Vertebrata</taxon>
        <taxon>Euteleostomi</taxon>
        <taxon>Mammalia</taxon>
        <taxon>Eutheria</taxon>
        <taxon>Euarchontoglires</taxon>
        <taxon>Glires</taxon>
        <taxon>Rodentia</taxon>
        <taxon>Hystricomorpha</taxon>
        <taxon>Caviidae</taxon>
        <taxon>Cavia</taxon>
    </lineage>
</organism>
<proteinExistence type="evidence at transcript level"/>
<protein>
    <recommendedName>
        <fullName>Potassium voltage-gated channel subfamily E member 1</fullName>
    </recommendedName>
    <alternativeName>
        <fullName>Delayed rectifier potassium channel subunit IsK</fullName>
    </alternativeName>
    <alternativeName>
        <fullName>IKs producing slow voltage-gated potassium channel subunit beta Mink</fullName>
    </alternativeName>
    <alternativeName>
        <fullName>Minimal potassium channel</fullName>
    </alternativeName>
</protein>
<feature type="chain" id="PRO_0000144276" description="Potassium voltage-gated channel subfamily E member 1">
    <location>
        <begin position="1"/>
        <end position="125"/>
    </location>
</feature>
<feature type="transmembrane region" description="Helical" evidence="5">
    <location>
        <begin position="44"/>
        <end position="66"/>
    </location>
</feature>
<feature type="topological domain" description="Cytoplasmic" evidence="5">
    <location>
        <begin position="67"/>
        <end position="125"/>
    </location>
</feature>
<feature type="glycosylation site" description="N-linked (GlcNAc...) asparagine" evidence="5">
    <location>
        <position position="5"/>
    </location>
</feature>
<feature type="glycosylation site" description="N-linked (GlcNAc...) asparagine" evidence="5">
    <location>
        <position position="26"/>
    </location>
</feature>
<feature type="sequence conflict" description="In Ref. 1; no nucleotide entry." evidence="6" ref="1">
    <original>TVW</original>
    <variation>SVM</variation>
    <location>
        <begin position="15"/>
        <end position="17"/>
    </location>
</feature>
<reference key="1">
    <citation type="journal article" date="1993" name="Proc. Natl. Acad. Sci. U.S.A.">
        <title>The min K channel underlies the cardiac potassium current IKs and mediates species-specific responses to protein kinase C.</title>
        <authorList>
            <person name="Varnum M.D."/>
            <person name="Busch A.E."/>
            <person name="Bond C.T."/>
            <person name="Maylie J."/>
            <person name="Adelman J.P."/>
        </authorList>
    </citation>
    <scope>NUCLEOTIDE SEQUENCE [MRNA]</scope>
    <source>
        <tissue>Heart</tissue>
    </source>
</reference>
<reference key="2">
    <citation type="journal article" date="1994" name="Proc. Natl. Acad. Sci. U.S.A.">
        <title>K+ currents expressed from the guinea pig cardiac IsK protein are enhanced by activators of protein kinase C.</title>
        <authorList>
            <person name="Zhang J."/>
            <person name="Jurkiewicz N.K."/>
            <person name="Folander K."/>
            <person name="Lazarides E."/>
            <person name="Salata J.J."/>
            <person name="Swanson R."/>
        </authorList>
    </citation>
    <scope>NUCLEOTIDE SEQUENCE [MRNA]</scope>
    <source>
        <tissue>Heart muscle</tissue>
    </source>
</reference>